<organism>
    <name type="scientific">Nitratidesulfovibrio vulgaris (strain ATCC 29579 / DSM 644 / CCUG 34227 / NCIMB 8303 / VKM B-1760 / Hildenborough)</name>
    <name type="common">Desulfovibrio vulgaris</name>
    <dbReference type="NCBI Taxonomy" id="882"/>
    <lineage>
        <taxon>Bacteria</taxon>
        <taxon>Pseudomonadati</taxon>
        <taxon>Thermodesulfobacteriota</taxon>
        <taxon>Desulfovibrionia</taxon>
        <taxon>Desulfovibrionales</taxon>
        <taxon>Desulfovibrionaceae</taxon>
        <taxon>Nitratidesulfovibrio</taxon>
    </lineage>
</organism>
<gene>
    <name evidence="1" type="primary">glgB</name>
    <name type="ordered locus">DVU_2243</name>
</gene>
<proteinExistence type="inferred from homology"/>
<reference key="1">
    <citation type="journal article" date="2004" name="Nat. Biotechnol.">
        <title>The genome sequence of the anaerobic, sulfate-reducing bacterium Desulfovibrio vulgaris Hildenborough.</title>
        <authorList>
            <person name="Heidelberg J.F."/>
            <person name="Seshadri R."/>
            <person name="Haveman S.A."/>
            <person name="Hemme C.L."/>
            <person name="Paulsen I.T."/>
            <person name="Kolonay J.F."/>
            <person name="Eisen J.A."/>
            <person name="Ward N.L."/>
            <person name="Methe B.A."/>
            <person name="Brinkac L.M."/>
            <person name="Daugherty S.C."/>
            <person name="DeBoy R.T."/>
            <person name="Dodson R.J."/>
            <person name="Durkin A.S."/>
            <person name="Madupu R."/>
            <person name="Nelson W.C."/>
            <person name="Sullivan S.A."/>
            <person name="Fouts D.E."/>
            <person name="Haft D.H."/>
            <person name="Selengut J."/>
            <person name="Peterson J.D."/>
            <person name="Davidsen T.M."/>
            <person name="Zafar N."/>
            <person name="Zhou L."/>
            <person name="Radune D."/>
            <person name="Dimitrov G."/>
            <person name="Hance M."/>
            <person name="Tran K."/>
            <person name="Khouri H.M."/>
            <person name="Gill J."/>
            <person name="Utterback T.R."/>
            <person name="Feldblyum T.V."/>
            <person name="Wall J.D."/>
            <person name="Voordouw G."/>
            <person name="Fraser C.M."/>
        </authorList>
    </citation>
    <scope>NUCLEOTIDE SEQUENCE [LARGE SCALE GENOMIC DNA]</scope>
    <source>
        <strain>ATCC 29579 / DSM 644 / CCUG 34227 / NCIMB 8303 / VKM B-1760 / Hildenborough</strain>
    </source>
</reference>
<evidence type="ECO:0000255" key="1">
    <source>
        <dbReference type="HAMAP-Rule" id="MF_00685"/>
    </source>
</evidence>
<dbReference type="EC" id="2.4.1.18" evidence="1"/>
<dbReference type="EMBL" id="AE017285">
    <property type="protein sequence ID" value="AAS96716.1"/>
    <property type="molecule type" value="Genomic_DNA"/>
</dbReference>
<dbReference type="RefSeq" id="WP_010939518.1">
    <property type="nucleotide sequence ID" value="NC_002937.3"/>
</dbReference>
<dbReference type="RefSeq" id="YP_011456.1">
    <property type="nucleotide sequence ID" value="NC_002937.3"/>
</dbReference>
<dbReference type="SMR" id="Q729V5"/>
<dbReference type="STRING" id="882.DVU_2243"/>
<dbReference type="CAZy" id="CBM48">
    <property type="family name" value="Carbohydrate-Binding Module Family 48"/>
</dbReference>
<dbReference type="CAZy" id="GH13">
    <property type="family name" value="Glycoside Hydrolase Family 13"/>
</dbReference>
<dbReference type="PaxDb" id="882-DVU_2243"/>
<dbReference type="EnsemblBacteria" id="AAS96716">
    <property type="protein sequence ID" value="AAS96716"/>
    <property type="gene ID" value="DVU_2243"/>
</dbReference>
<dbReference type="KEGG" id="dvu:DVU_2243"/>
<dbReference type="PATRIC" id="fig|882.5.peg.2038"/>
<dbReference type="eggNOG" id="COG0296">
    <property type="taxonomic scope" value="Bacteria"/>
</dbReference>
<dbReference type="HOGENOM" id="CLU_004245_3_2_7"/>
<dbReference type="OrthoDB" id="9800174at2"/>
<dbReference type="PhylomeDB" id="Q729V5"/>
<dbReference type="UniPathway" id="UPA00164"/>
<dbReference type="Proteomes" id="UP000002194">
    <property type="component" value="Chromosome"/>
</dbReference>
<dbReference type="GO" id="GO:0005829">
    <property type="term" value="C:cytosol"/>
    <property type="evidence" value="ECO:0007669"/>
    <property type="project" value="TreeGrafter"/>
</dbReference>
<dbReference type="GO" id="GO:0003844">
    <property type="term" value="F:1,4-alpha-glucan branching enzyme activity"/>
    <property type="evidence" value="ECO:0007669"/>
    <property type="project" value="UniProtKB-UniRule"/>
</dbReference>
<dbReference type="GO" id="GO:0043169">
    <property type="term" value="F:cation binding"/>
    <property type="evidence" value="ECO:0007669"/>
    <property type="project" value="InterPro"/>
</dbReference>
<dbReference type="GO" id="GO:0004553">
    <property type="term" value="F:hydrolase activity, hydrolyzing O-glycosyl compounds"/>
    <property type="evidence" value="ECO:0007669"/>
    <property type="project" value="InterPro"/>
</dbReference>
<dbReference type="GO" id="GO:0005978">
    <property type="term" value="P:glycogen biosynthetic process"/>
    <property type="evidence" value="ECO:0007669"/>
    <property type="project" value="UniProtKB-UniRule"/>
</dbReference>
<dbReference type="CDD" id="cd11322">
    <property type="entry name" value="AmyAc_Glg_BE"/>
    <property type="match status" value="1"/>
</dbReference>
<dbReference type="CDD" id="cd02855">
    <property type="entry name" value="E_set_GBE_prok_N"/>
    <property type="match status" value="1"/>
</dbReference>
<dbReference type="FunFam" id="2.60.40.1180:FF:000002">
    <property type="entry name" value="1,4-alpha-glucan branching enzyme GlgB"/>
    <property type="match status" value="1"/>
</dbReference>
<dbReference type="FunFam" id="3.20.20.80:FF:000003">
    <property type="entry name" value="1,4-alpha-glucan branching enzyme GlgB"/>
    <property type="match status" value="1"/>
</dbReference>
<dbReference type="Gene3D" id="3.20.20.80">
    <property type="entry name" value="Glycosidases"/>
    <property type="match status" value="1"/>
</dbReference>
<dbReference type="Gene3D" id="2.60.40.1180">
    <property type="entry name" value="Golgi alpha-mannosidase II"/>
    <property type="match status" value="1"/>
</dbReference>
<dbReference type="Gene3D" id="2.60.40.10">
    <property type="entry name" value="Immunoglobulins"/>
    <property type="match status" value="1"/>
</dbReference>
<dbReference type="HAMAP" id="MF_00685">
    <property type="entry name" value="GlgB"/>
    <property type="match status" value="1"/>
</dbReference>
<dbReference type="InterPro" id="IPR006048">
    <property type="entry name" value="A-amylase/branching_C"/>
</dbReference>
<dbReference type="InterPro" id="IPR037439">
    <property type="entry name" value="Branching_enzy"/>
</dbReference>
<dbReference type="InterPro" id="IPR006407">
    <property type="entry name" value="GlgB"/>
</dbReference>
<dbReference type="InterPro" id="IPR044143">
    <property type="entry name" value="GlgB_N_E_set_prok"/>
</dbReference>
<dbReference type="InterPro" id="IPR006047">
    <property type="entry name" value="Glyco_hydro_13_cat_dom"/>
</dbReference>
<dbReference type="InterPro" id="IPR004193">
    <property type="entry name" value="Glyco_hydro_13_N"/>
</dbReference>
<dbReference type="InterPro" id="IPR013780">
    <property type="entry name" value="Glyco_hydro_b"/>
</dbReference>
<dbReference type="InterPro" id="IPR017853">
    <property type="entry name" value="Glycoside_hydrolase_SF"/>
</dbReference>
<dbReference type="InterPro" id="IPR013783">
    <property type="entry name" value="Ig-like_fold"/>
</dbReference>
<dbReference type="InterPro" id="IPR014756">
    <property type="entry name" value="Ig_E-set"/>
</dbReference>
<dbReference type="NCBIfam" id="TIGR01515">
    <property type="entry name" value="branching_enzym"/>
    <property type="match status" value="1"/>
</dbReference>
<dbReference type="NCBIfam" id="NF003811">
    <property type="entry name" value="PRK05402.1"/>
    <property type="match status" value="1"/>
</dbReference>
<dbReference type="NCBIfam" id="NF008967">
    <property type="entry name" value="PRK12313.1"/>
    <property type="match status" value="1"/>
</dbReference>
<dbReference type="PANTHER" id="PTHR43651">
    <property type="entry name" value="1,4-ALPHA-GLUCAN-BRANCHING ENZYME"/>
    <property type="match status" value="1"/>
</dbReference>
<dbReference type="PANTHER" id="PTHR43651:SF3">
    <property type="entry name" value="1,4-ALPHA-GLUCAN-BRANCHING ENZYME"/>
    <property type="match status" value="1"/>
</dbReference>
<dbReference type="Pfam" id="PF00128">
    <property type="entry name" value="Alpha-amylase"/>
    <property type="match status" value="2"/>
</dbReference>
<dbReference type="Pfam" id="PF02806">
    <property type="entry name" value="Alpha-amylase_C"/>
    <property type="match status" value="1"/>
</dbReference>
<dbReference type="Pfam" id="PF02922">
    <property type="entry name" value="CBM_48"/>
    <property type="match status" value="1"/>
</dbReference>
<dbReference type="PIRSF" id="PIRSF000463">
    <property type="entry name" value="GlgB"/>
    <property type="match status" value="1"/>
</dbReference>
<dbReference type="SMART" id="SM00642">
    <property type="entry name" value="Aamy"/>
    <property type="match status" value="1"/>
</dbReference>
<dbReference type="SUPFAM" id="SSF51445">
    <property type="entry name" value="(Trans)glycosidases"/>
    <property type="match status" value="1"/>
</dbReference>
<dbReference type="SUPFAM" id="SSF81296">
    <property type="entry name" value="E set domains"/>
    <property type="match status" value="1"/>
</dbReference>
<dbReference type="SUPFAM" id="SSF51011">
    <property type="entry name" value="Glycosyl hydrolase domain"/>
    <property type="match status" value="1"/>
</dbReference>
<feature type="chain" id="PRO_0000188701" description="1,4-alpha-glucan branching enzyme GlgB">
    <location>
        <begin position="1"/>
        <end position="640"/>
    </location>
</feature>
<feature type="active site" description="Nucleophile" evidence="1">
    <location>
        <position position="317"/>
    </location>
</feature>
<feature type="active site" description="Proton donor" evidence="1">
    <location>
        <position position="370"/>
    </location>
</feature>
<protein>
    <recommendedName>
        <fullName evidence="1">1,4-alpha-glucan branching enzyme GlgB</fullName>
        <ecNumber evidence="1">2.4.1.18</ecNumber>
    </recommendedName>
    <alternativeName>
        <fullName evidence="1">1,4-alpha-D-glucan:1,4-alpha-D-glucan 6-glucosyl-transferase</fullName>
    </alternativeName>
    <alternativeName>
        <fullName evidence="1">Alpha-(1-&gt;4)-glucan branching enzyme</fullName>
    </alternativeName>
    <alternativeName>
        <fullName evidence="1">Glycogen branching enzyme</fullName>
        <shortName evidence="1">BE</shortName>
    </alternativeName>
</protein>
<comment type="function">
    <text evidence="1">Catalyzes the formation of the alpha-1,6-glucosidic linkages in glycogen by scission of a 1,4-alpha-linked oligosaccharide from growing alpha-1,4-glucan chains and the subsequent attachment of the oligosaccharide to the alpha-1,6 position.</text>
</comment>
<comment type="catalytic activity">
    <reaction evidence="1">
        <text>Transfers a segment of a (1-&gt;4)-alpha-D-glucan chain to a primary hydroxy group in a similar glucan chain.</text>
        <dbReference type="EC" id="2.4.1.18"/>
    </reaction>
</comment>
<comment type="pathway">
    <text evidence="1">Glycan biosynthesis; glycogen biosynthesis.</text>
</comment>
<comment type="subunit">
    <text evidence="1">Monomer.</text>
</comment>
<comment type="similarity">
    <text evidence="1">Belongs to the glycosyl hydrolase 13 family. GlgB subfamily.</text>
</comment>
<keyword id="KW-0119">Carbohydrate metabolism</keyword>
<keyword id="KW-0320">Glycogen biosynthesis</keyword>
<keyword id="KW-0321">Glycogen metabolism</keyword>
<keyword id="KW-0328">Glycosyltransferase</keyword>
<keyword id="KW-1185">Reference proteome</keyword>
<keyword id="KW-0808">Transferase</keyword>
<accession>Q729V5</accession>
<name>GLGB_NITV2</name>
<sequence>MTIPCSRPLFIEPFDLYLFGMGRHRHLYRILGAHPAVQDGEAGYRFAVWAPNARSVHLSGDCNGWRHEGCPLFPVGVSGVWAAFVPGVRRGSLYKFVVRGADGRQEQKADPFALWAEMRPGVASVAWDIDNHAWGDGAWMAERARQGLPLERPVSIYEVHLGSWRRRHGDGHPFLTYDELGDQLIPYATGLGFTHLELLPVAEHPLDQSWGYQTGHYYAPTSRFGSPEGFKRFVDRCHQAGLGVILDWVPAHFPRDAWSLGRFDGTALYEHLDPRLGEHPDWGTYIFNYGRNEVRNFLTANALYWLREFHIDGLRMDAVASMLYLDYSREAGQWLPNRHGGRENLDAVDFLREVNTVIHAEFPGAMTLAEESTAWPGVSRPVYTGGLGFSFKWNMGWMHDTLGYLAEDPIHRAYHHGSLTFSMLYAFSENFVLPLSHDEVVHGKGALLSKMPGDMWQQQANLRLLYAYQWAHPGKKLLFMGGEFGQWNEWDESRELDWCLYRFPAHEGIARLVGDLNRLLRSEPAMHRRDHDWSGFRWVDFADYGSSVISFLRLAAGERPLLWIFNFTPVVRRFYRVPCPRGGTWRELCNTDSAYYGGSDVGNAGAVMAREDHWGGGHFIELTLPPLAAMCFAPVTGQGT</sequence>